<keyword id="KW-1185">Reference proteome</keyword>
<keyword id="KW-0678">Repressor</keyword>
<keyword id="KW-0687">Ribonucleoprotein</keyword>
<keyword id="KW-0689">Ribosomal protein</keyword>
<keyword id="KW-0694">RNA-binding</keyword>
<keyword id="KW-0699">rRNA-binding</keyword>
<keyword id="KW-0810">Translation regulation</keyword>
<keyword id="KW-0820">tRNA-binding</keyword>
<feature type="chain" id="PRO_0000308070" description="Large ribosomal subunit protein uL1">
    <location>
        <begin position="1"/>
        <end position="231"/>
    </location>
</feature>
<protein>
    <recommendedName>
        <fullName evidence="1">Large ribosomal subunit protein uL1</fullName>
    </recommendedName>
    <alternativeName>
        <fullName evidence="2">50S ribosomal protein L1</fullName>
    </alternativeName>
</protein>
<evidence type="ECO:0000255" key="1">
    <source>
        <dbReference type="HAMAP-Rule" id="MF_01318"/>
    </source>
</evidence>
<evidence type="ECO:0000305" key="2"/>
<organism>
    <name type="scientific">Polaromonas sp. (strain JS666 / ATCC BAA-500)</name>
    <dbReference type="NCBI Taxonomy" id="296591"/>
    <lineage>
        <taxon>Bacteria</taxon>
        <taxon>Pseudomonadati</taxon>
        <taxon>Pseudomonadota</taxon>
        <taxon>Betaproteobacteria</taxon>
        <taxon>Burkholderiales</taxon>
        <taxon>Comamonadaceae</taxon>
        <taxon>Polaromonas</taxon>
    </lineage>
</organism>
<accession>Q123G0</accession>
<proteinExistence type="inferred from homology"/>
<name>RL1_POLSJ</name>
<dbReference type="EMBL" id="CP000316">
    <property type="protein sequence ID" value="ABE46332.1"/>
    <property type="molecule type" value="Genomic_DNA"/>
</dbReference>
<dbReference type="RefSeq" id="WP_011485321.1">
    <property type="nucleotide sequence ID" value="NC_007948.1"/>
</dbReference>
<dbReference type="SMR" id="Q123G0"/>
<dbReference type="STRING" id="296591.Bpro_4445"/>
<dbReference type="KEGG" id="pol:Bpro_4445"/>
<dbReference type="eggNOG" id="COG0081">
    <property type="taxonomic scope" value="Bacteria"/>
</dbReference>
<dbReference type="HOGENOM" id="CLU_062853_0_0_4"/>
<dbReference type="OrthoDB" id="9803740at2"/>
<dbReference type="Proteomes" id="UP000001983">
    <property type="component" value="Chromosome"/>
</dbReference>
<dbReference type="GO" id="GO:0022625">
    <property type="term" value="C:cytosolic large ribosomal subunit"/>
    <property type="evidence" value="ECO:0007669"/>
    <property type="project" value="TreeGrafter"/>
</dbReference>
<dbReference type="GO" id="GO:0019843">
    <property type="term" value="F:rRNA binding"/>
    <property type="evidence" value="ECO:0007669"/>
    <property type="project" value="UniProtKB-UniRule"/>
</dbReference>
<dbReference type="GO" id="GO:0003735">
    <property type="term" value="F:structural constituent of ribosome"/>
    <property type="evidence" value="ECO:0007669"/>
    <property type="project" value="InterPro"/>
</dbReference>
<dbReference type="GO" id="GO:0000049">
    <property type="term" value="F:tRNA binding"/>
    <property type="evidence" value="ECO:0007669"/>
    <property type="project" value="UniProtKB-KW"/>
</dbReference>
<dbReference type="GO" id="GO:0006417">
    <property type="term" value="P:regulation of translation"/>
    <property type="evidence" value="ECO:0007669"/>
    <property type="project" value="UniProtKB-KW"/>
</dbReference>
<dbReference type="GO" id="GO:0006412">
    <property type="term" value="P:translation"/>
    <property type="evidence" value="ECO:0007669"/>
    <property type="project" value="UniProtKB-UniRule"/>
</dbReference>
<dbReference type="CDD" id="cd00403">
    <property type="entry name" value="Ribosomal_L1"/>
    <property type="match status" value="1"/>
</dbReference>
<dbReference type="FunFam" id="3.40.50.790:FF:000001">
    <property type="entry name" value="50S ribosomal protein L1"/>
    <property type="match status" value="1"/>
</dbReference>
<dbReference type="Gene3D" id="3.30.190.20">
    <property type="match status" value="1"/>
</dbReference>
<dbReference type="Gene3D" id="3.40.50.790">
    <property type="match status" value="1"/>
</dbReference>
<dbReference type="HAMAP" id="MF_01318_B">
    <property type="entry name" value="Ribosomal_uL1_B"/>
    <property type="match status" value="1"/>
</dbReference>
<dbReference type="InterPro" id="IPR005878">
    <property type="entry name" value="Ribosom_uL1_bac-type"/>
</dbReference>
<dbReference type="InterPro" id="IPR002143">
    <property type="entry name" value="Ribosomal_uL1"/>
</dbReference>
<dbReference type="InterPro" id="IPR023674">
    <property type="entry name" value="Ribosomal_uL1-like"/>
</dbReference>
<dbReference type="InterPro" id="IPR028364">
    <property type="entry name" value="Ribosomal_uL1/biogenesis"/>
</dbReference>
<dbReference type="InterPro" id="IPR016095">
    <property type="entry name" value="Ribosomal_uL1_3-a/b-sand"/>
</dbReference>
<dbReference type="InterPro" id="IPR023673">
    <property type="entry name" value="Ribosomal_uL1_CS"/>
</dbReference>
<dbReference type="NCBIfam" id="TIGR01169">
    <property type="entry name" value="rplA_bact"/>
    <property type="match status" value="1"/>
</dbReference>
<dbReference type="PANTHER" id="PTHR36427">
    <property type="entry name" value="54S RIBOSOMAL PROTEIN L1, MITOCHONDRIAL"/>
    <property type="match status" value="1"/>
</dbReference>
<dbReference type="PANTHER" id="PTHR36427:SF3">
    <property type="entry name" value="LARGE RIBOSOMAL SUBUNIT PROTEIN UL1M"/>
    <property type="match status" value="1"/>
</dbReference>
<dbReference type="Pfam" id="PF00687">
    <property type="entry name" value="Ribosomal_L1"/>
    <property type="match status" value="1"/>
</dbReference>
<dbReference type="PIRSF" id="PIRSF002155">
    <property type="entry name" value="Ribosomal_L1"/>
    <property type="match status" value="1"/>
</dbReference>
<dbReference type="SUPFAM" id="SSF56808">
    <property type="entry name" value="Ribosomal protein L1"/>
    <property type="match status" value="1"/>
</dbReference>
<dbReference type="PROSITE" id="PS01199">
    <property type="entry name" value="RIBOSOMAL_L1"/>
    <property type="match status" value="1"/>
</dbReference>
<reference key="1">
    <citation type="journal article" date="2008" name="Appl. Environ. Microbiol.">
        <title>The genome of Polaromonas sp. strain JS666: insights into the evolution of a hydrocarbon- and xenobiotic-degrading bacterium, and features of relevance to biotechnology.</title>
        <authorList>
            <person name="Mattes T.E."/>
            <person name="Alexander A.K."/>
            <person name="Richardson P.M."/>
            <person name="Munk A.C."/>
            <person name="Han C.S."/>
            <person name="Stothard P."/>
            <person name="Coleman N.V."/>
        </authorList>
    </citation>
    <scope>NUCLEOTIDE SEQUENCE [LARGE SCALE GENOMIC DNA]</scope>
    <source>
        <strain>JS666 / ATCC BAA-500</strain>
    </source>
</reference>
<comment type="function">
    <text evidence="1">Binds directly to 23S rRNA. The L1 stalk is quite mobile in the ribosome, and is involved in E site tRNA release.</text>
</comment>
<comment type="function">
    <text evidence="1">Protein L1 is also a translational repressor protein, it controls the translation of the L11 operon by binding to its mRNA.</text>
</comment>
<comment type="subunit">
    <text evidence="1">Part of the 50S ribosomal subunit.</text>
</comment>
<comment type="similarity">
    <text evidence="1">Belongs to the universal ribosomal protein uL1 family.</text>
</comment>
<sequence>MSKLTKRQKTIGDKIDSNKLYALSDAIGLVKEFAVAKFDESIDVAVQLGIDAKKSDQVVRGAVVLPNGTGKTKRVAVFAQGAKAEEAKAAGADIVGMDDLAAEIKAGKMDFDVVIASPDAMRIVGTLGQILGPRGLMPNPKVGTVTPDVATAVKNAKAGQVQFRVDKAGIVHGTIGRRSFDTAKLQGNLAALIDALQKAKPASSKGVYLKKVAVSSTMGVGVRVDTQTIAA</sequence>
<gene>
    <name evidence="1" type="primary">rplA</name>
    <name type="ordered locus">Bpro_4445</name>
</gene>